<keyword id="KW-0963">Cytoplasm</keyword>
<keyword id="KW-0227">DNA damage</keyword>
<keyword id="KW-0228">DNA excision</keyword>
<keyword id="KW-0234">DNA repair</keyword>
<keyword id="KW-0267">Excision nuclease</keyword>
<keyword id="KW-1185">Reference proteome</keyword>
<keyword id="KW-0742">SOS response</keyword>
<comment type="function">
    <text evidence="1">The UvrABC repair system catalyzes the recognition and processing of DNA lesions. UvrC both incises the 5' and 3' sides of the lesion. The N-terminal half is responsible for the 3' incision and the C-terminal half is responsible for the 5' incision.</text>
</comment>
<comment type="subunit">
    <text evidence="1">Interacts with UvrB in an incision complex.</text>
</comment>
<comment type="subcellular location">
    <subcellularLocation>
        <location evidence="1">Cytoplasm</location>
    </subcellularLocation>
</comment>
<comment type="similarity">
    <text evidence="1">Belongs to the UvrC family.</text>
</comment>
<organism>
    <name type="scientific">Streptococcus agalactiae serotype V (strain ATCC BAA-611 / 2603 V/R)</name>
    <dbReference type="NCBI Taxonomy" id="208435"/>
    <lineage>
        <taxon>Bacteria</taxon>
        <taxon>Bacillati</taxon>
        <taxon>Bacillota</taxon>
        <taxon>Bacilli</taxon>
        <taxon>Lactobacillales</taxon>
        <taxon>Streptococcaceae</taxon>
        <taxon>Streptococcus</taxon>
    </lineage>
</organism>
<feature type="chain" id="PRO_0000227478" description="UvrABC system protein C">
    <location>
        <begin position="1"/>
        <end position="593"/>
    </location>
</feature>
<feature type="domain" description="GIY-YIG" evidence="1">
    <location>
        <begin position="14"/>
        <end position="91"/>
    </location>
</feature>
<feature type="domain" description="UVR" evidence="1">
    <location>
        <begin position="196"/>
        <end position="231"/>
    </location>
</feature>
<evidence type="ECO:0000255" key="1">
    <source>
        <dbReference type="HAMAP-Rule" id="MF_00203"/>
    </source>
</evidence>
<proteinExistence type="inferred from homology"/>
<protein>
    <recommendedName>
        <fullName evidence="1">UvrABC system protein C</fullName>
        <shortName evidence="1">Protein UvrC</shortName>
    </recommendedName>
    <alternativeName>
        <fullName evidence="1">Excinuclease ABC subunit C</fullName>
    </alternativeName>
</protein>
<name>UVRC_STRA5</name>
<gene>
    <name evidence="1" type="primary">uvrC</name>
    <name type="ordered locus">SAG1222</name>
</gene>
<sequence length="593" mass="68392">MNELIKHKLELLPDSPGCYLHKDKNGTIIYVGKAKNLKNRVKSYFHGSHNTKTELLVSEIEDFEYIVTTSNTEALLLEINLIQENMPKYNIRLKDDKSYPYIKITNERYPRLMITRQVKKSDGTYFGPYPDSGAATEIKRLLDRLFPFKKCTNPANKVCFYYHLGQCNAHTVCQTNKAYWDSLREDVKQFLNGKDNKIVNGLTEKMKSAAMTMEFERAAEYRDLIEAISLLRTKQRVIHQDMKDRDVFGYFVDKGWMCVQVFFVRNGKLIQRDVNMFPYYNEPEEDFLTYIGQFYQDTKHFLPKEVFIPQDIDAKSVETIVGCKIVKPQRGEKKQLVNLAIKNARVSLQQKFDLLEKDIRKTHGAIENLGNLLNIPKPVRIEAFDNSNIQGTSPVAAMVVFVNGKPSKKDYRKFKIKTVIGPDDYASMREVIHRRYSRVLKDGLTPPDLIVIDGGQGQVNIARDVIENQFGLAIPIAGLQKNDKHQTHELLFGDPLEVVELPRNSEEFFLLHRIQDEVHRFAITFHRQLRSKNSFSSKLDGITGLGPKRKQLLMKHFKSLPNIQKAEIEDIIMCGIPRTVAESLRDSLNDPPK</sequence>
<accession>Q8DZ90</accession>
<reference key="1">
    <citation type="journal article" date="2002" name="Proc. Natl. Acad. Sci. U.S.A.">
        <title>Complete genome sequence and comparative genomic analysis of an emerging human pathogen, serotype V Streptococcus agalactiae.</title>
        <authorList>
            <person name="Tettelin H."/>
            <person name="Masignani V."/>
            <person name="Cieslewicz M.J."/>
            <person name="Eisen J.A."/>
            <person name="Peterson S.N."/>
            <person name="Wessels M.R."/>
            <person name="Paulsen I.T."/>
            <person name="Nelson K.E."/>
            <person name="Margarit I."/>
            <person name="Read T.D."/>
            <person name="Madoff L.C."/>
            <person name="Wolf A.M."/>
            <person name="Beanan M.J."/>
            <person name="Brinkac L.M."/>
            <person name="Daugherty S.C."/>
            <person name="DeBoy R.T."/>
            <person name="Durkin A.S."/>
            <person name="Kolonay J.F."/>
            <person name="Madupu R."/>
            <person name="Lewis M.R."/>
            <person name="Radune D."/>
            <person name="Fedorova N.B."/>
            <person name="Scanlan D."/>
            <person name="Khouri H.M."/>
            <person name="Mulligan S."/>
            <person name="Carty H.A."/>
            <person name="Cline R.T."/>
            <person name="Van Aken S.E."/>
            <person name="Gill J."/>
            <person name="Scarselli M."/>
            <person name="Mora M."/>
            <person name="Iacobini E.T."/>
            <person name="Brettoni C."/>
            <person name="Galli G."/>
            <person name="Mariani M."/>
            <person name="Vegni F."/>
            <person name="Maione D."/>
            <person name="Rinaudo D."/>
            <person name="Rappuoli R."/>
            <person name="Telford J.L."/>
            <person name="Kasper D.L."/>
            <person name="Grandi G."/>
            <person name="Fraser C.M."/>
        </authorList>
    </citation>
    <scope>NUCLEOTIDE SEQUENCE [LARGE SCALE GENOMIC DNA]</scope>
    <source>
        <strain>ATCC BAA-611 / 2603 V/R</strain>
    </source>
</reference>
<dbReference type="EMBL" id="AE009948">
    <property type="protein sequence ID" value="AAN00102.1"/>
    <property type="molecule type" value="Genomic_DNA"/>
</dbReference>
<dbReference type="RefSeq" id="NP_688229.1">
    <property type="nucleotide sequence ID" value="NC_004116.1"/>
</dbReference>
<dbReference type="RefSeq" id="WP_001003952.1">
    <property type="nucleotide sequence ID" value="NC_004116.1"/>
</dbReference>
<dbReference type="SMR" id="Q8DZ90"/>
<dbReference type="STRING" id="208435.SAG1222"/>
<dbReference type="KEGG" id="sag:SAG1222"/>
<dbReference type="PATRIC" id="fig|208435.3.peg.1230"/>
<dbReference type="HOGENOM" id="CLU_014841_3_2_9"/>
<dbReference type="OrthoDB" id="9804933at2"/>
<dbReference type="Proteomes" id="UP000000821">
    <property type="component" value="Chromosome"/>
</dbReference>
<dbReference type="GO" id="GO:0005737">
    <property type="term" value="C:cytoplasm"/>
    <property type="evidence" value="ECO:0007669"/>
    <property type="project" value="UniProtKB-SubCell"/>
</dbReference>
<dbReference type="GO" id="GO:0009380">
    <property type="term" value="C:excinuclease repair complex"/>
    <property type="evidence" value="ECO:0007669"/>
    <property type="project" value="InterPro"/>
</dbReference>
<dbReference type="GO" id="GO:0003677">
    <property type="term" value="F:DNA binding"/>
    <property type="evidence" value="ECO:0007669"/>
    <property type="project" value="UniProtKB-UniRule"/>
</dbReference>
<dbReference type="GO" id="GO:0009381">
    <property type="term" value="F:excinuclease ABC activity"/>
    <property type="evidence" value="ECO:0007669"/>
    <property type="project" value="UniProtKB-UniRule"/>
</dbReference>
<dbReference type="GO" id="GO:0006289">
    <property type="term" value="P:nucleotide-excision repair"/>
    <property type="evidence" value="ECO:0007669"/>
    <property type="project" value="UniProtKB-UniRule"/>
</dbReference>
<dbReference type="GO" id="GO:0009432">
    <property type="term" value="P:SOS response"/>
    <property type="evidence" value="ECO:0007669"/>
    <property type="project" value="UniProtKB-UniRule"/>
</dbReference>
<dbReference type="CDD" id="cd10434">
    <property type="entry name" value="GIY-YIG_UvrC_Cho"/>
    <property type="match status" value="1"/>
</dbReference>
<dbReference type="FunFam" id="3.30.420.340:FF:000002">
    <property type="entry name" value="UvrABC system protein C"/>
    <property type="match status" value="1"/>
</dbReference>
<dbReference type="FunFam" id="3.40.1440.10:FF:000001">
    <property type="entry name" value="UvrABC system protein C"/>
    <property type="match status" value="1"/>
</dbReference>
<dbReference type="Gene3D" id="1.10.150.20">
    <property type="entry name" value="5' to 3' exonuclease, C-terminal subdomain"/>
    <property type="match status" value="1"/>
</dbReference>
<dbReference type="Gene3D" id="3.40.1440.10">
    <property type="entry name" value="GIY-YIG endonuclease"/>
    <property type="match status" value="1"/>
</dbReference>
<dbReference type="Gene3D" id="4.10.860.10">
    <property type="entry name" value="UVR domain"/>
    <property type="match status" value="1"/>
</dbReference>
<dbReference type="Gene3D" id="3.30.420.340">
    <property type="entry name" value="UvrC, RNAse H endonuclease domain"/>
    <property type="match status" value="1"/>
</dbReference>
<dbReference type="HAMAP" id="MF_00203">
    <property type="entry name" value="UvrC"/>
    <property type="match status" value="1"/>
</dbReference>
<dbReference type="InterPro" id="IPR000305">
    <property type="entry name" value="GIY-YIG_endonuc"/>
</dbReference>
<dbReference type="InterPro" id="IPR035901">
    <property type="entry name" value="GIY-YIG_endonuc_sf"/>
</dbReference>
<dbReference type="InterPro" id="IPR047296">
    <property type="entry name" value="GIY-YIG_UvrC_Cho"/>
</dbReference>
<dbReference type="InterPro" id="IPR010994">
    <property type="entry name" value="RuvA_2-like"/>
</dbReference>
<dbReference type="InterPro" id="IPR001943">
    <property type="entry name" value="UVR_dom"/>
</dbReference>
<dbReference type="InterPro" id="IPR036876">
    <property type="entry name" value="UVR_dom_sf"/>
</dbReference>
<dbReference type="InterPro" id="IPR050066">
    <property type="entry name" value="UvrABC_protein_C"/>
</dbReference>
<dbReference type="InterPro" id="IPR004791">
    <property type="entry name" value="UvrC"/>
</dbReference>
<dbReference type="InterPro" id="IPR001162">
    <property type="entry name" value="UvrC_RNase_H_dom"/>
</dbReference>
<dbReference type="InterPro" id="IPR038476">
    <property type="entry name" value="UvrC_RNase_H_dom_sf"/>
</dbReference>
<dbReference type="NCBIfam" id="TIGR00194">
    <property type="entry name" value="uvrC"/>
    <property type="match status" value="1"/>
</dbReference>
<dbReference type="PANTHER" id="PTHR30562:SF1">
    <property type="entry name" value="UVRABC SYSTEM PROTEIN C"/>
    <property type="match status" value="1"/>
</dbReference>
<dbReference type="PANTHER" id="PTHR30562">
    <property type="entry name" value="UVRC/OXIDOREDUCTASE"/>
    <property type="match status" value="1"/>
</dbReference>
<dbReference type="Pfam" id="PF01541">
    <property type="entry name" value="GIY-YIG"/>
    <property type="match status" value="1"/>
</dbReference>
<dbReference type="Pfam" id="PF02151">
    <property type="entry name" value="UVR"/>
    <property type="match status" value="1"/>
</dbReference>
<dbReference type="Pfam" id="PF22920">
    <property type="entry name" value="UvrC_RNaseH"/>
    <property type="match status" value="1"/>
</dbReference>
<dbReference type="Pfam" id="PF08459">
    <property type="entry name" value="UvrC_RNaseH_dom"/>
    <property type="match status" value="1"/>
</dbReference>
<dbReference type="SMART" id="SM00465">
    <property type="entry name" value="GIYc"/>
    <property type="match status" value="1"/>
</dbReference>
<dbReference type="SUPFAM" id="SSF46600">
    <property type="entry name" value="C-terminal UvrC-binding domain of UvrB"/>
    <property type="match status" value="1"/>
</dbReference>
<dbReference type="SUPFAM" id="SSF82771">
    <property type="entry name" value="GIY-YIG endonuclease"/>
    <property type="match status" value="1"/>
</dbReference>
<dbReference type="SUPFAM" id="SSF47781">
    <property type="entry name" value="RuvA domain 2-like"/>
    <property type="match status" value="1"/>
</dbReference>
<dbReference type="PROSITE" id="PS50164">
    <property type="entry name" value="GIY_YIG"/>
    <property type="match status" value="1"/>
</dbReference>
<dbReference type="PROSITE" id="PS50151">
    <property type="entry name" value="UVR"/>
    <property type="match status" value="1"/>
</dbReference>
<dbReference type="PROSITE" id="PS50165">
    <property type="entry name" value="UVRC"/>
    <property type="match status" value="1"/>
</dbReference>